<gene>
    <name evidence="8" type="primary">Mms19</name>
    <name evidence="8" type="synonym">NEST:bs07f08</name>
    <name evidence="8" type="ORF">CG12005</name>
</gene>
<comment type="function">
    <text evidence="2 3 4">Key component of the cytosolic iron-sulfur protein assembly (CIA) complex, a multiprotein complex that mediates the incorporation of iron-sulfur cluster into apoproteins specifically involved in DNA metabolism and genomic integrity (By similarity). In the CIA complex, MMS19 acts as an adapter between early-acting CIA components and a subset of cellular target iron-sulfur proteins (By similarity). Essential for diploid cell cycles, organ growth and development (PubMed:29361561). Regulates mitosis by binding to Xpd and thereby competing with the Xpd-mediated repression on the Cdk-activating kinase (CAK) complex (PubMed:29361561). Regulates the centrosomal localization of the MT regulator tacc, a downstream target of aurA kinase (PubMed:33211700). Binds to microtubules (MT) (PubMed:33211700). Regulates spindle and astral MT growth, MT stability and bundling (PubMed:33211700). In neuroblasts, necessary for timely and coordinated spindle assembly and orientation which is necessary for mitotic progression (PubMed:33211700). In young embryos, the maternal protein is important for progression through mitosis (PubMed:29361561).</text>
</comment>
<comment type="subunit">
    <text evidence="2 3 4">Component of the CIA complex (By similarity). Interacts with Xpd and galla-2 (PubMed:29361561). Binds to microtubules (PubMed:33211700).</text>
</comment>
<comment type="subcellular location">
    <subcellularLocation>
        <location evidence="2 3">Cytoplasm</location>
        <location evidence="2 3">Cytoskeleton</location>
        <location evidence="2 3">Spindle</location>
    </subcellularLocation>
    <subcellularLocation>
        <location evidence="2 3">Nucleus</location>
    </subcellularLocation>
    <subcellularLocation>
        <location evidence="3">Cytoplasm</location>
    </subcellularLocation>
    <subcellularLocation>
        <location evidence="3">Midbody</location>
    </subcellularLocation>
    <text evidence="3">Localizes to the nucleus at the beginning of metaphase.</text>
</comment>
<comment type="tissue specificity">
    <text evidence="3">Expressed in embryos (at protein level).</text>
</comment>
<comment type="disruption phenotype">
    <text evidence="3 4">Shows slowed larval development with lack of imaginal disks and microcephaly with deformed and underdeveloped optical lobes (PubMed:29361561, PubMed:33211700). Death occurs at the third larval instar stage (PubMed:29361561, PubMed:33211700). Reduced levels of Xpd in embryos (PubMed:29361561). Results in higher proportion of neuroblasts in mitosis with shorter spindle and less dense astral microtubules with defective assembly and orientation (PubMed:33211700). Loss of maternal Mms19 causes cell cycle defects in young embryos (PubMed:29361561).</text>
</comment>
<comment type="similarity">
    <text evidence="2">Belongs to the MET18/MMS19 family.</text>
</comment>
<proteinExistence type="evidence at protein level"/>
<evidence type="ECO:0000250" key="1">
    <source>
        <dbReference type="UniProtKB" id="Q96T76"/>
    </source>
</evidence>
<evidence type="ECO:0000255" key="2">
    <source>
        <dbReference type="RuleBase" id="RU367072"/>
    </source>
</evidence>
<evidence type="ECO:0000269" key="3">
    <source>
    </source>
</evidence>
<evidence type="ECO:0000269" key="4">
    <source>
    </source>
</evidence>
<evidence type="ECO:0000305" key="5"/>
<evidence type="ECO:0000312" key="6">
    <source>
        <dbReference type="EMBL" id="AAK52669.1"/>
    </source>
</evidence>
<evidence type="ECO:0000312" key="7">
    <source>
        <dbReference type="EMBL" id="AAL13529.1"/>
    </source>
</evidence>
<evidence type="ECO:0000312" key="8">
    <source>
        <dbReference type="FlyBase" id="FBgn0037301"/>
    </source>
</evidence>
<evidence type="ECO:0000312" key="9">
    <source>
        <dbReference type="Proteomes" id="UP000000803"/>
    </source>
</evidence>
<accession>Q95U54</accession>
<accession>Q968K4</accession>
<feature type="chain" id="PRO_0000452275" description="MMS19 nucleotide excision repair protein" evidence="5">
    <location>
        <begin position="1"/>
        <end position="959"/>
    </location>
</feature>
<feature type="repeat" description="HEAT 1" evidence="1">
    <location>
        <begin position="794"/>
        <end position="828"/>
    </location>
</feature>
<feature type="repeat" description="HEAT 2" evidence="1">
    <location>
        <begin position="832"/>
        <end position="871"/>
    </location>
</feature>
<feature type="repeat" description="HEAT 3" evidence="1">
    <location>
        <begin position="874"/>
        <end position="915"/>
    </location>
</feature>
<feature type="repeat" description="HEAT 4" evidence="1">
    <location>
        <begin position="918"/>
        <end position="956"/>
    </location>
</feature>
<feature type="sequence conflict" description="In Ref. 1; AAK52669." evidence="5" ref="1">
    <original>T</original>
    <variation>A</variation>
    <location>
        <position position="551"/>
    </location>
</feature>
<feature type="sequence conflict" description="In Ref. 1; AAK52669." evidence="5" ref="1">
    <original>R</original>
    <variation>S</variation>
    <location>
        <position position="710"/>
    </location>
</feature>
<keyword id="KW-0131">Cell cycle</keyword>
<keyword id="KW-0132">Cell division</keyword>
<keyword id="KW-0159">Chromosome partition</keyword>
<keyword id="KW-0963">Cytoplasm</keyword>
<keyword id="KW-0206">Cytoskeleton</keyword>
<keyword id="KW-0227">DNA damage</keyword>
<keyword id="KW-0234">DNA repair</keyword>
<keyword id="KW-0498">Mitosis</keyword>
<keyword id="KW-0539">Nucleus</keyword>
<keyword id="KW-1185">Reference proteome</keyword>
<keyword id="KW-0677">Repeat</keyword>
<name>MMS19_DROME</name>
<dbReference type="EMBL" id="AF319948">
    <property type="protein sequence ID" value="AAK52669.1"/>
    <property type="molecule type" value="mRNA"/>
</dbReference>
<dbReference type="EMBL" id="AE014297">
    <property type="protein sequence ID" value="AAN13264.1"/>
    <property type="molecule type" value="Genomic_DNA"/>
</dbReference>
<dbReference type="EMBL" id="AY058300">
    <property type="protein sequence ID" value="AAL13529.1"/>
    <property type="molecule type" value="mRNA"/>
</dbReference>
<dbReference type="RefSeq" id="NP_649519.1">
    <property type="nucleotide sequence ID" value="NM_141262.3"/>
</dbReference>
<dbReference type="SMR" id="Q95U54"/>
<dbReference type="FunCoup" id="Q95U54">
    <property type="interactions" value="2315"/>
</dbReference>
<dbReference type="IntAct" id="Q95U54">
    <property type="interactions" value="2"/>
</dbReference>
<dbReference type="STRING" id="7227.FBpp0078425"/>
<dbReference type="PaxDb" id="7227-FBpp0078425"/>
<dbReference type="EnsemblMetazoa" id="FBtr0078778">
    <property type="protein sequence ID" value="FBpp0078425"/>
    <property type="gene ID" value="FBgn0037301"/>
</dbReference>
<dbReference type="GeneID" id="40626"/>
<dbReference type="KEGG" id="dme:Dmel_CG12005"/>
<dbReference type="UCSC" id="CG12005-RB">
    <property type="organism name" value="d. melanogaster"/>
</dbReference>
<dbReference type="AGR" id="FB:FBgn0037301"/>
<dbReference type="CTD" id="64210"/>
<dbReference type="FlyBase" id="FBgn0037301">
    <property type="gene designation" value="Mms19"/>
</dbReference>
<dbReference type="VEuPathDB" id="VectorBase:FBgn0037301"/>
<dbReference type="eggNOG" id="KOG1967">
    <property type="taxonomic scope" value="Eukaryota"/>
</dbReference>
<dbReference type="GeneTree" id="ENSGT00390000015583"/>
<dbReference type="HOGENOM" id="CLU_005943_2_0_1"/>
<dbReference type="InParanoid" id="Q95U54"/>
<dbReference type="OMA" id="FSFMPEF"/>
<dbReference type="OrthoDB" id="342900at2759"/>
<dbReference type="PhylomeDB" id="Q95U54"/>
<dbReference type="BioGRID-ORCS" id="40626">
    <property type="hits" value="0 hits in 1 CRISPR screen"/>
</dbReference>
<dbReference type="GenomeRNAi" id="40626"/>
<dbReference type="PRO" id="PR:Q95U54"/>
<dbReference type="Proteomes" id="UP000000803">
    <property type="component" value="Chromosome 3R"/>
</dbReference>
<dbReference type="Bgee" id="FBgn0037301">
    <property type="expression patterns" value="Expressed in male accessory gland secondary cell (Drosophila) in male reproductive gland and 75 other cell types or tissues"/>
</dbReference>
<dbReference type="ExpressionAtlas" id="Q95U54">
    <property type="expression patterns" value="baseline and differential"/>
</dbReference>
<dbReference type="GO" id="GO:0005737">
    <property type="term" value="C:cytoplasm"/>
    <property type="evidence" value="ECO:0000314"/>
    <property type="project" value="UniProtKB"/>
</dbReference>
<dbReference type="GO" id="GO:0097361">
    <property type="term" value="C:cytosolic [4Fe-4S] assembly targeting complex"/>
    <property type="evidence" value="ECO:0000250"/>
    <property type="project" value="FlyBase"/>
</dbReference>
<dbReference type="GO" id="GO:1902695">
    <property type="term" value="C:metallochaperone complex"/>
    <property type="evidence" value="ECO:0000250"/>
    <property type="project" value="FlyBase"/>
</dbReference>
<dbReference type="GO" id="GO:0030496">
    <property type="term" value="C:midbody"/>
    <property type="evidence" value="ECO:0000314"/>
    <property type="project" value="UniProtKB"/>
</dbReference>
<dbReference type="GO" id="GO:0005634">
    <property type="term" value="C:nucleus"/>
    <property type="evidence" value="ECO:0000314"/>
    <property type="project" value="UniProtKB"/>
</dbReference>
<dbReference type="GO" id="GO:0005819">
    <property type="term" value="C:spindle"/>
    <property type="evidence" value="ECO:0000314"/>
    <property type="project" value="UniProtKB"/>
</dbReference>
<dbReference type="GO" id="GO:0005876">
    <property type="term" value="C:spindle microtubule"/>
    <property type="evidence" value="ECO:0000314"/>
    <property type="project" value="UniProtKB"/>
</dbReference>
<dbReference type="GO" id="GO:0030953">
    <property type="term" value="P:astral microtubule organization"/>
    <property type="evidence" value="ECO:0000315"/>
    <property type="project" value="UniProtKB"/>
</dbReference>
<dbReference type="GO" id="GO:0051301">
    <property type="term" value="P:cell division"/>
    <property type="evidence" value="ECO:0007669"/>
    <property type="project" value="UniProtKB-KW"/>
</dbReference>
<dbReference type="GO" id="GO:0007059">
    <property type="term" value="P:chromosome segregation"/>
    <property type="evidence" value="ECO:0007669"/>
    <property type="project" value="UniProtKB-KW"/>
</dbReference>
<dbReference type="GO" id="GO:0006281">
    <property type="term" value="P:DNA repair"/>
    <property type="evidence" value="ECO:0007669"/>
    <property type="project" value="UniProtKB-KW"/>
</dbReference>
<dbReference type="GO" id="GO:0140014">
    <property type="term" value="P:mitotic nuclear division"/>
    <property type="evidence" value="ECO:0000315"/>
    <property type="project" value="UniProtKB"/>
</dbReference>
<dbReference type="GO" id="GO:0031116">
    <property type="term" value="P:positive regulation of microtubule polymerization"/>
    <property type="evidence" value="ECO:0000315"/>
    <property type="project" value="UniProtKB"/>
</dbReference>
<dbReference type="GO" id="GO:0045840">
    <property type="term" value="P:positive regulation of mitotic nuclear division"/>
    <property type="evidence" value="ECO:0000315"/>
    <property type="project" value="UniProtKB"/>
</dbReference>
<dbReference type="GO" id="GO:0051604">
    <property type="term" value="P:protein maturation"/>
    <property type="evidence" value="ECO:0007669"/>
    <property type="project" value="InterPro"/>
</dbReference>
<dbReference type="FunFam" id="1.25.10.10:FF:000916">
    <property type="entry name" value="AGAP003548-PA"/>
    <property type="match status" value="1"/>
</dbReference>
<dbReference type="Gene3D" id="1.25.10.10">
    <property type="entry name" value="Leucine-rich Repeat Variant"/>
    <property type="match status" value="1"/>
</dbReference>
<dbReference type="InterPro" id="IPR011989">
    <property type="entry name" value="ARM-like"/>
</dbReference>
<dbReference type="InterPro" id="IPR016024">
    <property type="entry name" value="ARM-type_fold"/>
</dbReference>
<dbReference type="InterPro" id="IPR039920">
    <property type="entry name" value="MMS19"/>
</dbReference>
<dbReference type="InterPro" id="IPR024687">
    <property type="entry name" value="MMS19_C"/>
</dbReference>
<dbReference type="InterPro" id="IPR029240">
    <property type="entry name" value="MMS19_N"/>
</dbReference>
<dbReference type="PANTHER" id="PTHR12891">
    <property type="entry name" value="DNA REPAIR/TRANSCRIPTION PROTEIN MET18/MMS19"/>
    <property type="match status" value="1"/>
</dbReference>
<dbReference type="PANTHER" id="PTHR12891:SF0">
    <property type="entry name" value="MMS19 NUCLEOTIDE EXCISION REPAIR PROTEIN HOMOLOG"/>
    <property type="match status" value="1"/>
</dbReference>
<dbReference type="Pfam" id="PF12460">
    <property type="entry name" value="MMS19_C"/>
    <property type="match status" value="1"/>
</dbReference>
<dbReference type="Pfam" id="PF14500">
    <property type="entry name" value="MMS19_N"/>
    <property type="match status" value="1"/>
</dbReference>
<dbReference type="SUPFAM" id="SSF48371">
    <property type="entry name" value="ARM repeat"/>
    <property type="match status" value="2"/>
</dbReference>
<organism evidence="9">
    <name type="scientific">Drosophila melanogaster</name>
    <name type="common">Fruit fly</name>
    <dbReference type="NCBI Taxonomy" id="7227"/>
    <lineage>
        <taxon>Eukaryota</taxon>
        <taxon>Metazoa</taxon>
        <taxon>Ecdysozoa</taxon>
        <taxon>Arthropoda</taxon>
        <taxon>Hexapoda</taxon>
        <taxon>Insecta</taxon>
        <taxon>Pterygota</taxon>
        <taxon>Neoptera</taxon>
        <taxon>Endopterygota</taxon>
        <taxon>Diptera</taxon>
        <taxon>Brachycera</taxon>
        <taxon>Muscomorpha</taxon>
        <taxon>Ephydroidea</taxon>
        <taxon>Drosophilidae</taxon>
        <taxon>Drosophila</taxon>
        <taxon>Sophophora</taxon>
    </lineage>
</organism>
<protein>
    <recommendedName>
        <fullName evidence="5">MMS19 nucleotide excision repair protein</fullName>
    </recommendedName>
</protein>
<sequence>MTTPTRATLEKALKSDQKLVNSATQIAKDLTAKAYDISALAEALGFALSSPDMEERVAGTNLLSAVLIALPQDLLQERQLEFLSTFYMDRLRDHHNVMPAIIDGIDALVHMKALPRAQIPQILQSFFEHTTCQSQTRSDRTKLFHIFQYLTENFQDELQAMAGDFVYGLINSIDGERDPRNLDIIFSFMPEFLSTYPLLHLAEEMFEIFACYFPIDFNPSKQDPAAITRDELSKKLTNCLVANNEFAEGTVVLAIEKLESELLVAKLDSIELLHQAAVKFPPSVLEPHFDQIWQALKTETFPGNDNEEILKASLKALSALLERAAHIPDISHSYQSSILGVILPHLSDVNQRLFHPATGIALVCVSGDAPYAADKILNSFLLKLQAADASSEQRIKIYYIVSQVYKLSALRGSLQKLDTTIRESVQDDVIASLRLIEQEEFDAKKEDLELQKAALSVLNESAPLLNEKQRALIYKALVQLVSHPSIDIDFTTLTVSLGALQPVEVQSNFIDVCVRNFEIFSTFVKRKIYTNLLPLMPQIAFTQRILDLVMTQTFNDTTAEPVRLLALEALNKLLLLADQRFIVDVQQESNLLHKLIELGQKTEGLSMQSLEQIAGALSRITQQLPLSEQSAIVSEYLPGLNLSQSADLYITKGLLGYLHKDITLDDHFERLLTDLTQLSLNSDNEQLRVIAHHLLCSMVNKMESNPANLRKVKKITEQLKVAIKKGDVRAVEILAWVGKGLVVAGFDEAADVVGDLSDLLKHPSLSTAAALGFDIIAAEYPELDLPVVKFLYKQKLFHTIMGKMGSKLANYCVHHLKAFVYVLKATPQAVIKLNIEQLGPLLFKSLEEHNEAQSLCIALGICEKFVAQQDTYFQGHLAHLIPSCLELSKYKAQHTMQVRIAALQLLYDVTKYPTFVLLPHKVDVTLALAAALDDPKRLVRNTAVKARNAWYLVGAPSPN</sequence>
<reference evidence="6" key="1">
    <citation type="journal article" date="2001" name="Nucleic Acids Res.">
        <title>Cloning the human and mouse MMS19 genes and functional complementation of a yeast mms19 deletion mutant.</title>
        <authorList>
            <person name="Queimado L."/>
            <person name="Rao M."/>
            <person name="Schultz R.A."/>
            <person name="Koonin E.V."/>
            <person name="Aravind L."/>
            <person name="Nardo T."/>
            <person name="Stefanini M."/>
            <person name="Friedberg E.C."/>
        </authorList>
    </citation>
    <scope>NUCLEOTIDE SEQUENCE [MRNA]</scope>
</reference>
<reference evidence="9" key="2">
    <citation type="journal article" date="2000" name="Science">
        <title>The genome sequence of Drosophila melanogaster.</title>
        <authorList>
            <person name="Adams M.D."/>
            <person name="Celniker S.E."/>
            <person name="Holt R.A."/>
            <person name="Evans C.A."/>
            <person name="Gocayne J.D."/>
            <person name="Amanatides P.G."/>
            <person name="Scherer S.E."/>
            <person name="Li P.W."/>
            <person name="Hoskins R.A."/>
            <person name="Galle R.F."/>
            <person name="George R.A."/>
            <person name="Lewis S.E."/>
            <person name="Richards S."/>
            <person name="Ashburner M."/>
            <person name="Henderson S.N."/>
            <person name="Sutton G.G."/>
            <person name="Wortman J.R."/>
            <person name="Yandell M.D."/>
            <person name="Zhang Q."/>
            <person name="Chen L.X."/>
            <person name="Brandon R.C."/>
            <person name="Rogers Y.-H.C."/>
            <person name="Blazej R.G."/>
            <person name="Champe M."/>
            <person name="Pfeiffer B.D."/>
            <person name="Wan K.H."/>
            <person name="Doyle C."/>
            <person name="Baxter E.G."/>
            <person name="Helt G."/>
            <person name="Nelson C.R."/>
            <person name="Miklos G.L.G."/>
            <person name="Abril J.F."/>
            <person name="Agbayani A."/>
            <person name="An H.-J."/>
            <person name="Andrews-Pfannkoch C."/>
            <person name="Baldwin D."/>
            <person name="Ballew R.M."/>
            <person name="Basu A."/>
            <person name="Baxendale J."/>
            <person name="Bayraktaroglu L."/>
            <person name="Beasley E.M."/>
            <person name="Beeson K.Y."/>
            <person name="Benos P.V."/>
            <person name="Berman B.P."/>
            <person name="Bhandari D."/>
            <person name="Bolshakov S."/>
            <person name="Borkova D."/>
            <person name="Botchan M.R."/>
            <person name="Bouck J."/>
            <person name="Brokstein P."/>
            <person name="Brottier P."/>
            <person name="Burtis K.C."/>
            <person name="Busam D.A."/>
            <person name="Butler H."/>
            <person name="Cadieu E."/>
            <person name="Center A."/>
            <person name="Chandra I."/>
            <person name="Cherry J.M."/>
            <person name="Cawley S."/>
            <person name="Dahlke C."/>
            <person name="Davenport L.B."/>
            <person name="Davies P."/>
            <person name="de Pablos B."/>
            <person name="Delcher A."/>
            <person name="Deng Z."/>
            <person name="Mays A.D."/>
            <person name="Dew I."/>
            <person name="Dietz S.M."/>
            <person name="Dodson K."/>
            <person name="Doup L.E."/>
            <person name="Downes M."/>
            <person name="Dugan-Rocha S."/>
            <person name="Dunkov B.C."/>
            <person name="Dunn P."/>
            <person name="Durbin K.J."/>
            <person name="Evangelista C.C."/>
            <person name="Ferraz C."/>
            <person name="Ferriera S."/>
            <person name="Fleischmann W."/>
            <person name="Fosler C."/>
            <person name="Gabrielian A.E."/>
            <person name="Garg N.S."/>
            <person name="Gelbart W.M."/>
            <person name="Glasser K."/>
            <person name="Glodek A."/>
            <person name="Gong F."/>
            <person name="Gorrell J.H."/>
            <person name="Gu Z."/>
            <person name="Guan P."/>
            <person name="Harris M."/>
            <person name="Harris N.L."/>
            <person name="Harvey D.A."/>
            <person name="Heiman T.J."/>
            <person name="Hernandez J.R."/>
            <person name="Houck J."/>
            <person name="Hostin D."/>
            <person name="Houston K.A."/>
            <person name="Howland T.J."/>
            <person name="Wei M.-H."/>
            <person name="Ibegwam C."/>
            <person name="Jalali M."/>
            <person name="Kalush F."/>
            <person name="Karpen G.H."/>
            <person name="Ke Z."/>
            <person name="Kennison J.A."/>
            <person name="Ketchum K.A."/>
            <person name="Kimmel B.E."/>
            <person name="Kodira C.D."/>
            <person name="Kraft C.L."/>
            <person name="Kravitz S."/>
            <person name="Kulp D."/>
            <person name="Lai Z."/>
            <person name="Lasko P."/>
            <person name="Lei Y."/>
            <person name="Levitsky A.A."/>
            <person name="Li J.H."/>
            <person name="Li Z."/>
            <person name="Liang Y."/>
            <person name="Lin X."/>
            <person name="Liu X."/>
            <person name="Mattei B."/>
            <person name="McIntosh T.C."/>
            <person name="McLeod M.P."/>
            <person name="McPherson D."/>
            <person name="Merkulov G."/>
            <person name="Milshina N.V."/>
            <person name="Mobarry C."/>
            <person name="Morris J."/>
            <person name="Moshrefi A."/>
            <person name="Mount S.M."/>
            <person name="Moy M."/>
            <person name="Murphy B."/>
            <person name="Murphy L."/>
            <person name="Muzny D.M."/>
            <person name="Nelson D.L."/>
            <person name="Nelson D.R."/>
            <person name="Nelson K.A."/>
            <person name="Nixon K."/>
            <person name="Nusskern D.R."/>
            <person name="Pacleb J.M."/>
            <person name="Palazzolo M."/>
            <person name="Pittman G.S."/>
            <person name="Pan S."/>
            <person name="Pollard J."/>
            <person name="Puri V."/>
            <person name="Reese M.G."/>
            <person name="Reinert K."/>
            <person name="Remington K."/>
            <person name="Saunders R.D.C."/>
            <person name="Scheeler F."/>
            <person name="Shen H."/>
            <person name="Shue B.C."/>
            <person name="Siden-Kiamos I."/>
            <person name="Simpson M."/>
            <person name="Skupski M.P."/>
            <person name="Smith T.J."/>
            <person name="Spier E."/>
            <person name="Spradling A.C."/>
            <person name="Stapleton M."/>
            <person name="Strong R."/>
            <person name="Sun E."/>
            <person name="Svirskas R."/>
            <person name="Tector C."/>
            <person name="Turner R."/>
            <person name="Venter E."/>
            <person name="Wang A.H."/>
            <person name="Wang X."/>
            <person name="Wang Z.-Y."/>
            <person name="Wassarman D.A."/>
            <person name="Weinstock G.M."/>
            <person name="Weissenbach J."/>
            <person name="Williams S.M."/>
            <person name="Woodage T."/>
            <person name="Worley K.C."/>
            <person name="Wu D."/>
            <person name="Yang S."/>
            <person name="Yao Q.A."/>
            <person name="Ye J."/>
            <person name="Yeh R.-F."/>
            <person name="Zaveri J.S."/>
            <person name="Zhan M."/>
            <person name="Zhang G."/>
            <person name="Zhao Q."/>
            <person name="Zheng L."/>
            <person name="Zheng X.H."/>
            <person name="Zhong F.N."/>
            <person name="Zhong W."/>
            <person name="Zhou X."/>
            <person name="Zhu S.C."/>
            <person name="Zhu X."/>
            <person name="Smith H.O."/>
            <person name="Gibbs R.A."/>
            <person name="Myers E.W."/>
            <person name="Rubin G.M."/>
            <person name="Venter J.C."/>
        </authorList>
    </citation>
    <scope>NUCLEOTIDE SEQUENCE [LARGE SCALE GENOMIC DNA]</scope>
    <source>
        <strain evidence="9">Berkeley</strain>
    </source>
</reference>
<reference evidence="9" key="3">
    <citation type="journal article" date="2002" name="Genome Biol.">
        <title>Annotation of the Drosophila melanogaster euchromatic genome: a systematic review.</title>
        <authorList>
            <person name="Misra S."/>
            <person name="Crosby M.A."/>
            <person name="Mungall C.J."/>
            <person name="Matthews B.B."/>
            <person name="Campbell K.S."/>
            <person name="Hradecky P."/>
            <person name="Huang Y."/>
            <person name="Kaminker J.S."/>
            <person name="Millburn G.H."/>
            <person name="Prochnik S.E."/>
            <person name="Smith C.D."/>
            <person name="Tupy J.L."/>
            <person name="Whitfield E.J."/>
            <person name="Bayraktaroglu L."/>
            <person name="Berman B.P."/>
            <person name="Bettencourt B.R."/>
            <person name="Celniker S.E."/>
            <person name="de Grey A.D.N.J."/>
            <person name="Drysdale R.A."/>
            <person name="Harris N.L."/>
            <person name="Richter J."/>
            <person name="Russo S."/>
            <person name="Schroeder A.J."/>
            <person name="Shu S.Q."/>
            <person name="Stapleton M."/>
            <person name="Yamada C."/>
            <person name="Ashburner M."/>
            <person name="Gelbart W.M."/>
            <person name="Rubin G.M."/>
            <person name="Lewis S.E."/>
        </authorList>
    </citation>
    <scope>GENOME REANNOTATION</scope>
    <source>
        <strain evidence="9">Berkeley</strain>
    </source>
</reference>
<reference evidence="7" key="4">
    <citation type="journal article" date="2002" name="Genome Biol.">
        <title>A Drosophila full-length cDNA resource.</title>
        <authorList>
            <person name="Stapleton M."/>
            <person name="Carlson J.W."/>
            <person name="Brokstein P."/>
            <person name="Yu C."/>
            <person name="Champe M."/>
            <person name="George R.A."/>
            <person name="Guarin H."/>
            <person name="Kronmiller B."/>
            <person name="Pacleb J.M."/>
            <person name="Park S."/>
            <person name="Wan K.H."/>
            <person name="Rubin G.M."/>
            <person name="Celniker S.E."/>
        </authorList>
    </citation>
    <scope>NUCLEOTIDE SEQUENCE [LARGE SCALE MRNA]</scope>
    <source>
        <strain evidence="7">Berkeley</strain>
        <tissue evidence="7">Head</tissue>
    </source>
</reference>
<reference evidence="5" key="5">
    <citation type="journal article" date="2018" name="Development">
        <title>Mms19 is a mitotic gene that permits Cdk7 to be fully active as a Cdk-activating kinase.</title>
        <authorList>
            <person name="Nag R.N."/>
            <person name="Niggli S."/>
            <person name="Sousa-Guimaraes S."/>
            <person name="Vazquez-Pianzola P."/>
            <person name="Suter B."/>
        </authorList>
    </citation>
    <scope>FUNCTION</scope>
    <scope>INTERACTION WITH XPD-2 AND GALLA-2</scope>
    <scope>SUBCELLULAR LOCATION</scope>
    <scope>TISSUE SPECIFICITY</scope>
    <scope>DISRUPTION PHENOTYPE</scope>
</reference>
<reference evidence="5" key="6">
    <citation type="journal article" date="2020" name="PLoS Genet.">
        <title>Mms19 promotes spindle microtubule assembly in Drosophila neural stem cells.</title>
        <authorList>
            <person name="Chippalkatti R."/>
            <person name="Egger B."/>
            <person name="Suter B."/>
        </authorList>
    </citation>
    <scope>FUNCTION</scope>
    <scope>DISRUPTION PHENOTYPE</scope>
</reference>